<proteinExistence type="evidence at transcript level"/>
<evidence type="ECO:0000250" key="1"/>
<evidence type="ECO:0000255" key="2"/>
<evidence type="ECO:0000256" key="3">
    <source>
        <dbReference type="SAM" id="MobiDB-lite"/>
    </source>
</evidence>
<evidence type="ECO:0000305" key="4"/>
<name>PLSB_CARTI</name>
<dbReference type="EC" id="2.3.1.15"/>
<dbReference type="EMBL" id="L33841">
    <property type="protein sequence ID" value="AAA74319.1"/>
    <property type="molecule type" value="mRNA"/>
</dbReference>
<dbReference type="SMR" id="Q42713"/>
<dbReference type="UniPathway" id="UPA00557">
    <property type="reaction ID" value="UER00612"/>
</dbReference>
<dbReference type="GO" id="GO:0009570">
    <property type="term" value="C:chloroplast stroma"/>
    <property type="evidence" value="ECO:0007669"/>
    <property type="project" value="UniProtKB-SubCell"/>
</dbReference>
<dbReference type="GO" id="GO:0004366">
    <property type="term" value="F:glycerol-3-phosphate O-acyltransferase activity"/>
    <property type="evidence" value="ECO:0007669"/>
    <property type="project" value="UniProtKB-EC"/>
</dbReference>
<dbReference type="GO" id="GO:0016024">
    <property type="term" value="P:CDP-diacylglycerol biosynthetic process"/>
    <property type="evidence" value="ECO:0007669"/>
    <property type="project" value="UniProtKB-UniPathway"/>
</dbReference>
<dbReference type="GO" id="GO:0006655">
    <property type="term" value="P:phosphatidylglycerol biosynthetic process"/>
    <property type="evidence" value="ECO:0007669"/>
    <property type="project" value="TreeGrafter"/>
</dbReference>
<dbReference type="Gene3D" id="3.40.1130.10">
    <property type="entry name" value="Glycerol-3-phosphate (1)-acyltransferase"/>
    <property type="match status" value="1"/>
</dbReference>
<dbReference type="Gene3D" id="1.10.1200.50">
    <property type="entry name" value="Glycerol-3-phosphate acyltransferase, alpha helical bundle, N-terminal"/>
    <property type="match status" value="1"/>
</dbReference>
<dbReference type="InterPro" id="IPR016222">
    <property type="entry name" value="G3P_O-acylTrfase_chlp"/>
</dbReference>
<dbReference type="InterPro" id="IPR023083">
    <property type="entry name" value="G3P_O-acylTrfase_N"/>
</dbReference>
<dbReference type="InterPro" id="IPR038114">
    <property type="entry name" value="GPAT_N_sf"/>
</dbReference>
<dbReference type="InterPro" id="IPR002123">
    <property type="entry name" value="Plipid/glycerol_acylTrfase"/>
</dbReference>
<dbReference type="PANTHER" id="PTHR35695">
    <property type="entry name" value="GLYCEROL-3-PHOSPHATE ACYLTRANSFERASE, CHLOROPLASTIC"/>
    <property type="match status" value="1"/>
</dbReference>
<dbReference type="PANTHER" id="PTHR35695:SF1">
    <property type="entry name" value="GLYCEROL-3-PHOSPHATE ACYLTRANSFERASE, CHLOROPLASTIC"/>
    <property type="match status" value="1"/>
</dbReference>
<dbReference type="Pfam" id="PF01553">
    <property type="entry name" value="Acyltransferase"/>
    <property type="match status" value="1"/>
</dbReference>
<dbReference type="Pfam" id="PF14829">
    <property type="entry name" value="GPAT_N"/>
    <property type="match status" value="1"/>
</dbReference>
<dbReference type="PIRSF" id="PIRSF000431">
    <property type="entry name" value="Glycerol-3-P_O-acyltransfrase"/>
    <property type="match status" value="1"/>
</dbReference>
<dbReference type="SMART" id="SM00563">
    <property type="entry name" value="PlsC"/>
    <property type="match status" value="1"/>
</dbReference>
<dbReference type="SUPFAM" id="SSF69593">
    <property type="entry name" value="Glycerol-3-phosphate (1)-acyltransferase"/>
    <property type="match status" value="1"/>
</dbReference>
<protein>
    <recommendedName>
        <fullName>Glycerol-3-phosphate acyltransferase, chloroplastic</fullName>
        <shortName>GPAT</shortName>
        <ecNumber>2.3.1.15</ecNumber>
    </recommendedName>
</protein>
<keyword id="KW-0012">Acyltransferase</keyword>
<keyword id="KW-0150">Chloroplast</keyword>
<keyword id="KW-0444">Lipid biosynthesis</keyword>
<keyword id="KW-0443">Lipid metabolism</keyword>
<keyword id="KW-0594">Phospholipid biosynthesis</keyword>
<keyword id="KW-1208">Phospholipid metabolism</keyword>
<keyword id="KW-0934">Plastid</keyword>
<keyword id="KW-0808">Transferase</keyword>
<keyword id="KW-0809">Transit peptide</keyword>
<comment type="function">
    <text>Esterifies acyl-group from acyl-ACP to the sn-1 position of glycerol-3-phosphate. The enzyme from chilling-resistant plants discriminates against non-fluid palmitic acid and selects oleic acid whereas the enzyme from sensitive plants accepts both fatty acids.</text>
</comment>
<comment type="catalytic activity">
    <reaction>
        <text>sn-glycerol 3-phosphate + an acyl-CoA = a 1-acyl-sn-glycero-3-phosphate + CoA</text>
        <dbReference type="Rhea" id="RHEA:15325"/>
        <dbReference type="ChEBI" id="CHEBI:57287"/>
        <dbReference type="ChEBI" id="CHEBI:57597"/>
        <dbReference type="ChEBI" id="CHEBI:57970"/>
        <dbReference type="ChEBI" id="CHEBI:58342"/>
        <dbReference type="EC" id="2.3.1.15"/>
    </reaction>
</comment>
<comment type="pathway">
    <text>Phospholipid metabolism; CDP-diacylglycerol biosynthesis; CDP-diacylglycerol from sn-glycerol 3-phosphate: step 1/3.</text>
</comment>
<comment type="subcellular location">
    <subcellularLocation>
        <location>Plastid</location>
        <location>Chloroplast stroma</location>
    </subcellularLocation>
</comment>
<comment type="domain">
    <text evidence="1">The HXXXXD motif is essential for acyltransferase activity and may constitute the binding site for the phosphate moiety of the glycerol-3-phosphate.</text>
</comment>
<comment type="similarity">
    <text evidence="4">Belongs to the GPAT/DAPAT family.</text>
</comment>
<sequence>MSIFFSPSSPTLFFSTTNANPRVSPSSSPSSAFTPPLSSSRLRPILRGFPCLAFSAPANAAHGTAETVHGNKWPSPSSSSSAATQPSAGSDHGHSRTFIDARSEQDLLSGIQRELEAGTLPKHIAQAMEELYQNYKNAVLQSAAPHAEDIVLSNMRVAFDRMFLDVKEPFEFSPYHEAILEPFNYYMFGQNYIRPLVNFRESYVGNVSVFGVMEEQLKQGDKVVLISNHQTEADPAVIALMLETTNPHISENIIYVAGDRVITDPLCKPFSMGRNLLCVYSKKHMNDVPELAEMKKRSNTRSLKGRMALLLRGGSKIIWIAPSGGRDRPDPITNQWFPAPFDATSLDNMRRLVDHAGLVGHIYPLAILCHDIMPPPLQVEKEIGEKSWISFHGTGISVAPEINFQEVTASCGSPEEAKAAYSQALYDSVCEQYKVLHSAVHGGKGLEASTPSVSLSQPLQFLD</sequence>
<accession>Q42713</accession>
<organism>
    <name type="scientific">Carthamus tinctorius</name>
    <name type="common">Safflower</name>
    <dbReference type="NCBI Taxonomy" id="4222"/>
    <lineage>
        <taxon>Eukaryota</taxon>
        <taxon>Viridiplantae</taxon>
        <taxon>Streptophyta</taxon>
        <taxon>Embryophyta</taxon>
        <taxon>Tracheophyta</taxon>
        <taxon>Spermatophyta</taxon>
        <taxon>Magnoliopsida</taxon>
        <taxon>eudicotyledons</taxon>
        <taxon>Gunneridae</taxon>
        <taxon>Pentapetalae</taxon>
        <taxon>asterids</taxon>
        <taxon>campanulids</taxon>
        <taxon>Asterales</taxon>
        <taxon>Asteraceae</taxon>
        <taxon>Carduoideae</taxon>
        <taxon>Cardueae</taxon>
        <taxon>Centaureinae</taxon>
        <taxon>Carthamus</taxon>
    </lineage>
</organism>
<feature type="transit peptide" description="Chloroplast" evidence="2">
    <location>
        <begin position="1"/>
        <end position="91"/>
    </location>
</feature>
<feature type="chain" id="PRO_0000024695" description="Glycerol-3-phosphate acyltransferase, chloroplastic">
    <location>
        <begin position="92"/>
        <end position="463"/>
    </location>
</feature>
<feature type="region of interest" description="Disordered" evidence="3">
    <location>
        <begin position="18"/>
        <end position="37"/>
    </location>
</feature>
<feature type="region of interest" description="Disordered" evidence="3">
    <location>
        <begin position="65"/>
        <end position="95"/>
    </location>
</feature>
<feature type="short sequence motif" description="HXXXXD motif">
    <location>
        <begin position="229"/>
        <end position="234"/>
    </location>
</feature>
<feature type="compositionally biased region" description="Low complexity" evidence="3">
    <location>
        <begin position="24"/>
        <end position="37"/>
    </location>
</feature>
<feature type="compositionally biased region" description="Low complexity" evidence="3">
    <location>
        <begin position="74"/>
        <end position="90"/>
    </location>
</feature>
<reference key="1">
    <citation type="journal article" date="1994" name="Plant Physiol.">
        <title>Nucleotide sequence of a cDNA from Carthamus tinctorius encoding a glycerol-3-phosphate acyl transferase.</title>
        <authorList>
            <person name="Bhella R.S."/>
            <person name="Mackenzie S.L."/>
        </authorList>
    </citation>
    <scope>NUCLEOTIDE SEQUENCE [MRNA]</scope>
    <source>
        <tissue>Cotyledon</tissue>
    </source>
</reference>